<accession>B7VLF4</accession>
<organism>
    <name type="scientific">Vibrio atlanticus (strain LGP32)</name>
    <name type="common">Vibrio splendidus (strain Mel32)</name>
    <dbReference type="NCBI Taxonomy" id="575788"/>
    <lineage>
        <taxon>Bacteria</taxon>
        <taxon>Pseudomonadati</taxon>
        <taxon>Pseudomonadota</taxon>
        <taxon>Gammaproteobacteria</taxon>
        <taxon>Vibrionales</taxon>
        <taxon>Vibrionaceae</taxon>
        <taxon>Vibrio</taxon>
    </lineage>
</organism>
<gene>
    <name evidence="1" type="primary">rplB</name>
    <name type="ordered locus">VS_2829</name>
</gene>
<feature type="chain" id="PRO_1000165780" description="Large ribosomal subunit protein uL2">
    <location>
        <begin position="1"/>
        <end position="274"/>
    </location>
</feature>
<feature type="region of interest" description="Disordered" evidence="2">
    <location>
        <begin position="223"/>
        <end position="274"/>
    </location>
</feature>
<feature type="compositionally biased region" description="Basic residues" evidence="2">
    <location>
        <begin position="256"/>
        <end position="274"/>
    </location>
</feature>
<proteinExistence type="inferred from homology"/>
<sequence>MAIVKCKPTSPGRRHVVKVVNADLHKGKPYAPLLEKNSKNGGRNNNGRITVRHIGGGHKHHYRLVDFKRTKDGIPAKVERLEYDPNRSANIALVLYADGERRYIIAPKGVNAGDQIQSGVDAAIKAGNTLPMRNIPVGSTVHCVELKPGKGAQLARSAGAYAQIIARDGAYVTIRLRSGEMRKVLSEGRATIGEVGNSEHMLRELGKAGASRWRGVRPTVRGVVMNPVDHPHGGGEGRTSGGRHPVSPWGVPTKGFKTRKNKRTDKYIVRRRTK</sequence>
<protein>
    <recommendedName>
        <fullName evidence="1">Large ribosomal subunit protein uL2</fullName>
    </recommendedName>
    <alternativeName>
        <fullName evidence="3">50S ribosomal protein L2</fullName>
    </alternativeName>
</protein>
<name>RL2_VIBA3</name>
<comment type="function">
    <text evidence="1">One of the primary rRNA binding proteins. Required for association of the 30S and 50S subunits to form the 70S ribosome, for tRNA binding and peptide bond formation. It has been suggested to have peptidyltransferase activity; this is somewhat controversial. Makes several contacts with the 16S rRNA in the 70S ribosome.</text>
</comment>
<comment type="subunit">
    <text evidence="1">Part of the 50S ribosomal subunit. Forms a bridge to the 30S subunit in the 70S ribosome.</text>
</comment>
<comment type="similarity">
    <text evidence="1">Belongs to the universal ribosomal protein uL2 family.</text>
</comment>
<evidence type="ECO:0000255" key="1">
    <source>
        <dbReference type="HAMAP-Rule" id="MF_01320"/>
    </source>
</evidence>
<evidence type="ECO:0000256" key="2">
    <source>
        <dbReference type="SAM" id="MobiDB-lite"/>
    </source>
</evidence>
<evidence type="ECO:0000305" key="3"/>
<reference key="1">
    <citation type="submission" date="2009-02" db="EMBL/GenBank/DDBJ databases">
        <title>Vibrio splendidus str. LGP32 complete genome.</title>
        <authorList>
            <person name="Mazel D."/>
            <person name="Le Roux F."/>
        </authorList>
    </citation>
    <scope>NUCLEOTIDE SEQUENCE [LARGE SCALE GENOMIC DNA]</scope>
    <source>
        <strain>LGP32</strain>
    </source>
</reference>
<dbReference type="EMBL" id="FM954972">
    <property type="protein sequence ID" value="CAV20122.1"/>
    <property type="molecule type" value="Genomic_DNA"/>
</dbReference>
<dbReference type="SMR" id="B7VLF4"/>
<dbReference type="STRING" id="575788.VS_2829"/>
<dbReference type="KEGG" id="vsp:VS_2829"/>
<dbReference type="eggNOG" id="COG0090">
    <property type="taxonomic scope" value="Bacteria"/>
</dbReference>
<dbReference type="HOGENOM" id="CLU_036235_2_1_6"/>
<dbReference type="Proteomes" id="UP000009100">
    <property type="component" value="Chromosome 1"/>
</dbReference>
<dbReference type="GO" id="GO:0015934">
    <property type="term" value="C:large ribosomal subunit"/>
    <property type="evidence" value="ECO:0007669"/>
    <property type="project" value="InterPro"/>
</dbReference>
<dbReference type="GO" id="GO:0019843">
    <property type="term" value="F:rRNA binding"/>
    <property type="evidence" value="ECO:0007669"/>
    <property type="project" value="UniProtKB-UniRule"/>
</dbReference>
<dbReference type="GO" id="GO:0003735">
    <property type="term" value="F:structural constituent of ribosome"/>
    <property type="evidence" value="ECO:0007669"/>
    <property type="project" value="InterPro"/>
</dbReference>
<dbReference type="GO" id="GO:0016740">
    <property type="term" value="F:transferase activity"/>
    <property type="evidence" value="ECO:0007669"/>
    <property type="project" value="InterPro"/>
</dbReference>
<dbReference type="GO" id="GO:0002181">
    <property type="term" value="P:cytoplasmic translation"/>
    <property type="evidence" value="ECO:0007669"/>
    <property type="project" value="TreeGrafter"/>
</dbReference>
<dbReference type="FunFam" id="2.30.30.30:FF:000001">
    <property type="entry name" value="50S ribosomal protein L2"/>
    <property type="match status" value="1"/>
</dbReference>
<dbReference type="FunFam" id="2.40.50.140:FF:000003">
    <property type="entry name" value="50S ribosomal protein L2"/>
    <property type="match status" value="1"/>
</dbReference>
<dbReference type="FunFam" id="4.10.950.10:FF:000001">
    <property type="entry name" value="50S ribosomal protein L2"/>
    <property type="match status" value="1"/>
</dbReference>
<dbReference type="Gene3D" id="2.30.30.30">
    <property type="match status" value="1"/>
</dbReference>
<dbReference type="Gene3D" id="2.40.50.140">
    <property type="entry name" value="Nucleic acid-binding proteins"/>
    <property type="match status" value="1"/>
</dbReference>
<dbReference type="Gene3D" id="4.10.950.10">
    <property type="entry name" value="Ribosomal protein L2, domain 3"/>
    <property type="match status" value="1"/>
</dbReference>
<dbReference type="HAMAP" id="MF_01320_B">
    <property type="entry name" value="Ribosomal_uL2_B"/>
    <property type="match status" value="1"/>
</dbReference>
<dbReference type="InterPro" id="IPR012340">
    <property type="entry name" value="NA-bd_OB-fold"/>
</dbReference>
<dbReference type="InterPro" id="IPR014722">
    <property type="entry name" value="Rib_uL2_dom2"/>
</dbReference>
<dbReference type="InterPro" id="IPR002171">
    <property type="entry name" value="Ribosomal_uL2"/>
</dbReference>
<dbReference type="InterPro" id="IPR005880">
    <property type="entry name" value="Ribosomal_uL2_bac/org-type"/>
</dbReference>
<dbReference type="InterPro" id="IPR022669">
    <property type="entry name" value="Ribosomal_uL2_C"/>
</dbReference>
<dbReference type="InterPro" id="IPR022671">
    <property type="entry name" value="Ribosomal_uL2_CS"/>
</dbReference>
<dbReference type="InterPro" id="IPR014726">
    <property type="entry name" value="Ribosomal_uL2_dom3"/>
</dbReference>
<dbReference type="InterPro" id="IPR022666">
    <property type="entry name" value="Ribosomal_uL2_RNA-bd_dom"/>
</dbReference>
<dbReference type="InterPro" id="IPR008991">
    <property type="entry name" value="Translation_prot_SH3-like_sf"/>
</dbReference>
<dbReference type="NCBIfam" id="TIGR01171">
    <property type="entry name" value="rplB_bact"/>
    <property type="match status" value="1"/>
</dbReference>
<dbReference type="PANTHER" id="PTHR13691:SF5">
    <property type="entry name" value="LARGE RIBOSOMAL SUBUNIT PROTEIN UL2M"/>
    <property type="match status" value="1"/>
</dbReference>
<dbReference type="PANTHER" id="PTHR13691">
    <property type="entry name" value="RIBOSOMAL PROTEIN L2"/>
    <property type="match status" value="1"/>
</dbReference>
<dbReference type="Pfam" id="PF00181">
    <property type="entry name" value="Ribosomal_L2"/>
    <property type="match status" value="1"/>
</dbReference>
<dbReference type="Pfam" id="PF03947">
    <property type="entry name" value="Ribosomal_L2_C"/>
    <property type="match status" value="1"/>
</dbReference>
<dbReference type="PIRSF" id="PIRSF002158">
    <property type="entry name" value="Ribosomal_L2"/>
    <property type="match status" value="1"/>
</dbReference>
<dbReference type="SMART" id="SM01383">
    <property type="entry name" value="Ribosomal_L2"/>
    <property type="match status" value="1"/>
</dbReference>
<dbReference type="SMART" id="SM01382">
    <property type="entry name" value="Ribosomal_L2_C"/>
    <property type="match status" value="1"/>
</dbReference>
<dbReference type="SUPFAM" id="SSF50249">
    <property type="entry name" value="Nucleic acid-binding proteins"/>
    <property type="match status" value="1"/>
</dbReference>
<dbReference type="SUPFAM" id="SSF50104">
    <property type="entry name" value="Translation proteins SH3-like domain"/>
    <property type="match status" value="1"/>
</dbReference>
<dbReference type="PROSITE" id="PS00467">
    <property type="entry name" value="RIBOSOMAL_L2"/>
    <property type="match status" value="1"/>
</dbReference>
<keyword id="KW-0687">Ribonucleoprotein</keyword>
<keyword id="KW-0689">Ribosomal protein</keyword>
<keyword id="KW-0694">RNA-binding</keyword>
<keyword id="KW-0699">rRNA-binding</keyword>